<evidence type="ECO:0000250" key="1"/>
<evidence type="ECO:0000269" key="2">
    <source>
    </source>
</evidence>
<evidence type="ECO:0000305" key="3"/>
<evidence type="ECO:0000305" key="4">
    <source>
    </source>
</evidence>
<organism>
    <name type="scientific">Arabidopsis thaliana</name>
    <name type="common">Mouse-ear cress</name>
    <dbReference type="NCBI Taxonomy" id="3702"/>
    <lineage>
        <taxon>Eukaryota</taxon>
        <taxon>Viridiplantae</taxon>
        <taxon>Streptophyta</taxon>
        <taxon>Embryophyta</taxon>
        <taxon>Tracheophyta</taxon>
        <taxon>Spermatophyta</taxon>
        <taxon>Magnoliopsida</taxon>
        <taxon>eudicotyledons</taxon>
        <taxon>Gunneridae</taxon>
        <taxon>Pentapetalae</taxon>
        <taxon>rosids</taxon>
        <taxon>malvids</taxon>
        <taxon>Brassicales</taxon>
        <taxon>Brassicaceae</taxon>
        <taxon>Camelineae</taxon>
        <taxon>Arabidopsis</taxon>
    </lineage>
</organism>
<name>GPP2_ARATH</name>
<comment type="function">
    <text evidence="2">Acts as a glycerol-3-phosphatase with higher stereospecificity for L-glycerol-3-phosphate than DL-glycerol-3-phosphate.</text>
</comment>
<comment type="catalytic activity">
    <reaction>
        <text>sn-glycerol 1-phosphate + H2O = glycerol + phosphate</text>
        <dbReference type="Rhea" id="RHEA:46084"/>
        <dbReference type="ChEBI" id="CHEBI:15377"/>
        <dbReference type="ChEBI" id="CHEBI:17754"/>
        <dbReference type="ChEBI" id="CHEBI:43474"/>
        <dbReference type="ChEBI" id="CHEBI:57685"/>
        <dbReference type="EC" id="3.1.3.21"/>
    </reaction>
</comment>
<comment type="catalytic activity">
    <reaction>
        <text>sn-glycerol 3-phosphate + H2O = glycerol + phosphate</text>
        <dbReference type="Rhea" id="RHEA:66372"/>
        <dbReference type="ChEBI" id="CHEBI:15377"/>
        <dbReference type="ChEBI" id="CHEBI:17754"/>
        <dbReference type="ChEBI" id="CHEBI:43474"/>
        <dbReference type="ChEBI" id="CHEBI:57597"/>
        <dbReference type="EC" id="3.1.3.21"/>
    </reaction>
</comment>
<comment type="cofactor">
    <cofactor evidence="1">
        <name>Mg(2+)</name>
        <dbReference type="ChEBI" id="CHEBI:18420"/>
    </cofactor>
</comment>
<comment type="biophysicochemical properties">
    <kinetics>
        <KM evidence="2">3.5 mM for DL-glycerol-3-phosphate</KM>
        <Vmax evidence="2">23.0 nmol/min/mg enzyme toward DL-glycerol-3-phosphate</Vmax>
    </kinetics>
    <phDependence>
        <text evidence="2">Optimum pH is 7.0.</text>
    </phDependence>
</comment>
<comment type="subcellular location">
    <subcellularLocation>
        <location evidence="4">Cytoplasm</location>
    </subcellularLocation>
</comment>
<comment type="tissue specificity">
    <text evidence="2">Ubiquitous with highest expression in siliques. Mainly restricted to the meristem of immature flower and vascular elements of the root, shoot, leave, siliqua and developing embryo (at the protein level).</text>
</comment>
<comment type="similarity">
    <text evidence="3">Belongs to the HAD-like hydrolase superfamily. DOG/GPP family.</text>
</comment>
<comment type="sequence caution" evidence="3">
    <conflict type="erroneous initiation">
        <sequence resource="EMBL-CDS" id="BAB08780"/>
    </conflict>
    <text>Truncated N-terminus.</text>
</comment>
<protein>
    <recommendedName>
        <fullName>(DL)-glycerol-3-phosphatase 2</fullName>
        <ecNumber>3.1.3.21</ecNumber>
    </recommendedName>
    <alternativeName>
        <fullName>Glycerol-1-phosphatase 2</fullName>
    </alternativeName>
    <alternativeName>
        <fullName>Haloacid dehalogenase-like hydrolase domain-containing protein GPP2</fullName>
    </alternativeName>
</protein>
<accession>Q8VZP1</accession>
<accession>Q9FKM6</accession>
<gene>
    <name type="primary">GPP2</name>
    <name type="synonym">GS1</name>
    <name type="ordered locus">At5g57440</name>
    <name type="ORF">MSF19</name>
    <name type="ORF">MUA2.2</name>
</gene>
<dbReference type="EC" id="3.1.3.21"/>
<dbReference type="EMBL" id="AB011482">
    <property type="protein sequence ID" value="BAB08780.1"/>
    <property type="status" value="ALT_INIT"/>
    <property type="molecule type" value="Genomic_DNA"/>
</dbReference>
<dbReference type="EMBL" id="CP002688">
    <property type="protein sequence ID" value="AED96902.1"/>
    <property type="molecule type" value="Genomic_DNA"/>
</dbReference>
<dbReference type="EMBL" id="AY063967">
    <property type="protein sequence ID" value="AAL36323.1"/>
    <property type="molecule type" value="mRNA"/>
</dbReference>
<dbReference type="EMBL" id="AY114031">
    <property type="protein sequence ID" value="AAM45079.1"/>
    <property type="molecule type" value="mRNA"/>
</dbReference>
<dbReference type="EMBL" id="AY084531">
    <property type="protein sequence ID" value="AAM61099.1"/>
    <property type="molecule type" value="mRNA"/>
</dbReference>
<dbReference type="RefSeq" id="NP_568858.1">
    <property type="nucleotide sequence ID" value="NM_125126.3"/>
</dbReference>
<dbReference type="SMR" id="Q8VZP1"/>
<dbReference type="BioGRID" id="21093">
    <property type="interactions" value="1"/>
</dbReference>
<dbReference type="FunCoup" id="Q8VZP1">
    <property type="interactions" value="2369"/>
</dbReference>
<dbReference type="STRING" id="3702.Q8VZP1"/>
<dbReference type="GlyGen" id="Q8VZP1">
    <property type="glycosylation" value="1 site"/>
</dbReference>
<dbReference type="PaxDb" id="3702-AT5G57440.1"/>
<dbReference type="ProteomicsDB" id="220777"/>
<dbReference type="EnsemblPlants" id="AT5G57440.1">
    <property type="protein sequence ID" value="AT5G57440.1"/>
    <property type="gene ID" value="AT5G57440"/>
</dbReference>
<dbReference type="GeneID" id="835849"/>
<dbReference type="Gramene" id="AT5G57440.1">
    <property type="protein sequence ID" value="AT5G57440.1"/>
    <property type="gene ID" value="AT5G57440"/>
</dbReference>
<dbReference type="KEGG" id="ath:AT5G57440"/>
<dbReference type="Araport" id="AT5G57440"/>
<dbReference type="TAIR" id="AT5G57440">
    <property type="gene designation" value="GS1"/>
</dbReference>
<dbReference type="eggNOG" id="KOG2914">
    <property type="taxonomic scope" value="Eukaryota"/>
</dbReference>
<dbReference type="HOGENOM" id="CLU_045011_13_0_1"/>
<dbReference type="InParanoid" id="Q8VZP1"/>
<dbReference type="OMA" id="IWCPHPG"/>
<dbReference type="OrthoDB" id="40579at2759"/>
<dbReference type="PhylomeDB" id="Q8VZP1"/>
<dbReference type="BioCyc" id="ARA:AT5G57440-MONOMER"/>
<dbReference type="PRO" id="PR:Q8VZP1"/>
<dbReference type="Proteomes" id="UP000006548">
    <property type="component" value="Chromosome 5"/>
</dbReference>
<dbReference type="ExpressionAtlas" id="Q8VZP1">
    <property type="expression patterns" value="baseline and differential"/>
</dbReference>
<dbReference type="GO" id="GO:0005829">
    <property type="term" value="C:cytosol"/>
    <property type="evidence" value="ECO:0007005"/>
    <property type="project" value="TAIR"/>
</dbReference>
<dbReference type="GO" id="GO:0005739">
    <property type="term" value="C:mitochondrion"/>
    <property type="evidence" value="ECO:0007005"/>
    <property type="project" value="TAIR"/>
</dbReference>
<dbReference type="GO" id="GO:0000121">
    <property type="term" value="F:glycerol-1-phosphatase activity"/>
    <property type="evidence" value="ECO:0007669"/>
    <property type="project" value="RHEA"/>
</dbReference>
<dbReference type="GO" id="GO:0043136">
    <property type="term" value="F:glycerol-3-phosphatase activity"/>
    <property type="evidence" value="ECO:0000314"/>
    <property type="project" value="UniProtKB"/>
</dbReference>
<dbReference type="GO" id="GO:0046872">
    <property type="term" value="F:metal ion binding"/>
    <property type="evidence" value="ECO:0007669"/>
    <property type="project" value="UniProtKB-KW"/>
</dbReference>
<dbReference type="GO" id="GO:0050308">
    <property type="term" value="F:sugar-phosphatase activity"/>
    <property type="evidence" value="ECO:0000314"/>
    <property type="project" value="TAIR"/>
</dbReference>
<dbReference type="GO" id="GO:0016311">
    <property type="term" value="P:dephosphorylation"/>
    <property type="evidence" value="ECO:0000314"/>
    <property type="project" value="UniProtKB"/>
</dbReference>
<dbReference type="GO" id="GO:0006114">
    <property type="term" value="P:glycerol biosynthetic process"/>
    <property type="evidence" value="ECO:0000315"/>
    <property type="project" value="UniProtKB"/>
</dbReference>
<dbReference type="CDD" id="cd07529">
    <property type="entry name" value="HAD_AtGPP-like"/>
    <property type="match status" value="1"/>
</dbReference>
<dbReference type="FunFam" id="1.10.150.240:FF:000001">
    <property type="entry name" value="Haloacid dehalogenase-like hydrolase domain"/>
    <property type="match status" value="1"/>
</dbReference>
<dbReference type="FunFam" id="3.40.50.1000:FF:000055">
    <property type="entry name" value="Haloacid dehalogenase-like hydrolase family protein"/>
    <property type="match status" value="1"/>
</dbReference>
<dbReference type="Gene3D" id="3.40.50.1000">
    <property type="entry name" value="HAD superfamily/HAD-like"/>
    <property type="match status" value="1"/>
</dbReference>
<dbReference type="Gene3D" id="1.10.150.240">
    <property type="entry name" value="Putative phosphatase, domain 2"/>
    <property type="match status" value="1"/>
</dbReference>
<dbReference type="InterPro" id="IPR045228">
    <property type="entry name" value="Gpp1/Gpp2-like"/>
</dbReference>
<dbReference type="InterPro" id="IPR036412">
    <property type="entry name" value="HAD-like_sf"/>
</dbReference>
<dbReference type="InterPro" id="IPR006439">
    <property type="entry name" value="HAD-SF_hydro_IA"/>
</dbReference>
<dbReference type="InterPro" id="IPR023214">
    <property type="entry name" value="HAD_sf"/>
</dbReference>
<dbReference type="InterPro" id="IPR023198">
    <property type="entry name" value="PGP-like_dom2"/>
</dbReference>
<dbReference type="NCBIfam" id="TIGR01509">
    <property type="entry name" value="HAD-SF-IA-v3"/>
    <property type="match status" value="1"/>
</dbReference>
<dbReference type="PANTHER" id="PTHR18901">
    <property type="entry name" value="2-DEOXYGLUCOSE-6-PHOSPHATE PHOSPHATASE 2"/>
    <property type="match status" value="1"/>
</dbReference>
<dbReference type="PANTHER" id="PTHR18901:SF38">
    <property type="entry name" value="PSEUDOURIDINE-5'-PHOSPHATASE"/>
    <property type="match status" value="1"/>
</dbReference>
<dbReference type="Pfam" id="PF00702">
    <property type="entry name" value="Hydrolase"/>
    <property type="match status" value="1"/>
</dbReference>
<dbReference type="SFLD" id="SFLDG01129">
    <property type="entry name" value="C1.5:_HAD__Beta-PGM__Phosphata"/>
    <property type="match status" value="1"/>
</dbReference>
<dbReference type="SFLD" id="SFLDS00003">
    <property type="entry name" value="Haloacid_Dehalogenase"/>
    <property type="match status" value="1"/>
</dbReference>
<dbReference type="SUPFAM" id="SSF56784">
    <property type="entry name" value="HAD-like"/>
    <property type="match status" value="1"/>
</dbReference>
<keyword id="KW-0963">Cytoplasm</keyword>
<keyword id="KW-0378">Hydrolase</keyword>
<keyword id="KW-0460">Magnesium</keyword>
<keyword id="KW-0479">Metal-binding</keyword>
<keyword id="KW-1185">Reference proteome</keyword>
<proteinExistence type="evidence at protein level"/>
<reference key="1">
    <citation type="journal article" date="1998" name="DNA Res.">
        <title>Structural analysis of Arabidopsis thaliana chromosome 5. V. Sequence features of the regions of 1,381,565 bp covered by twenty one physically assigned P1 and TAC clones.</title>
        <authorList>
            <person name="Kaneko T."/>
            <person name="Kotani H."/>
            <person name="Nakamura Y."/>
            <person name="Sato S."/>
            <person name="Asamizu E."/>
            <person name="Miyajima N."/>
            <person name="Tabata S."/>
        </authorList>
    </citation>
    <scope>NUCLEOTIDE SEQUENCE [LARGE SCALE GENOMIC DNA]</scope>
    <source>
        <strain>cv. Columbia</strain>
    </source>
</reference>
<reference key="2">
    <citation type="journal article" date="2017" name="Plant J.">
        <title>Araport11: a complete reannotation of the Arabidopsis thaliana reference genome.</title>
        <authorList>
            <person name="Cheng C.Y."/>
            <person name="Krishnakumar V."/>
            <person name="Chan A.P."/>
            <person name="Thibaud-Nissen F."/>
            <person name="Schobel S."/>
            <person name="Town C.D."/>
        </authorList>
    </citation>
    <scope>GENOME REANNOTATION</scope>
    <source>
        <strain>cv. Columbia</strain>
    </source>
</reference>
<reference key="3">
    <citation type="journal article" date="2003" name="Science">
        <title>Empirical analysis of transcriptional activity in the Arabidopsis genome.</title>
        <authorList>
            <person name="Yamada K."/>
            <person name="Lim J."/>
            <person name="Dale J.M."/>
            <person name="Chen H."/>
            <person name="Shinn P."/>
            <person name="Palm C.J."/>
            <person name="Southwick A.M."/>
            <person name="Wu H.C."/>
            <person name="Kim C.J."/>
            <person name="Nguyen M."/>
            <person name="Pham P.K."/>
            <person name="Cheuk R.F."/>
            <person name="Karlin-Newmann G."/>
            <person name="Liu S.X."/>
            <person name="Lam B."/>
            <person name="Sakano H."/>
            <person name="Wu T."/>
            <person name="Yu G."/>
            <person name="Miranda M."/>
            <person name="Quach H.L."/>
            <person name="Tripp M."/>
            <person name="Chang C.H."/>
            <person name="Lee J.M."/>
            <person name="Toriumi M.J."/>
            <person name="Chan M.M."/>
            <person name="Tang C.C."/>
            <person name="Onodera C.S."/>
            <person name="Deng J.M."/>
            <person name="Akiyama K."/>
            <person name="Ansari Y."/>
            <person name="Arakawa T."/>
            <person name="Banh J."/>
            <person name="Banno F."/>
            <person name="Bowser L."/>
            <person name="Brooks S.Y."/>
            <person name="Carninci P."/>
            <person name="Chao Q."/>
            <person name="Choy N."/>
            <person name="Enju A."/>
            <person name="Goldsmith A.D."/>
            <person name="Gurjal M."/>
            <person name="Hansen N.F."/>
            <person name="Hayashizaki Y."/>
            <person name="Johnson-Hopson C."/>
            <person name="Hsuan V.W."/>
            <person name="Iida K."/>
            <person name="Karnes M."/>
            <person name="Khan S."/>
            <person name="Koesema E."/>
            <person name="Ishida J."/>
            <person name="Jiang P.X."/>
            <person name="Jones T."/>
            <person name="Kawai J."/>
            <person name="Kamiya A."/>
            <person name="Meyers C."/>
            <person name="Nakajima M."/>
            <person name="Narusaka M."/>
            <person name="Seki M."/>
            <person name="Sakurai T."/>
            <person name="Satou M."/>
            <person name="Tamse R."/>
            <person name="Vaysberg M."/>
            <person name="Wallender E.K."/>
            <person name="Wong C."/>
            <person name="Yamamura Y."/>
            <person name="Yuan S."/>
            <person name="Shinozaki K."/>
            <person name="Davis R.W."/>
            <person name="Theologis A."/>
            <person name="Ecker J.R."/>
        </authorList>
    </citation>
    <scope>NUCLEOTIDE SEQUENCE [LARGE SCALE MRNA]</scope>
    <source>
        <strain>cv. Columbia</strain>
    </source>
</reference>
<reference key="4">
    <citation type="submission" date="2002-03" db="EMBL/GenBank/DDBJ databases">
        <title>Full-length cDNA from Arabidopsis thaliana.</title>
        <authorList>
            <person name="Brover V.V."/>
            <person name="Troukhan M.E."/>
            <person name="Alexandrov N.A."/>
            <person name="Lu Y.-P."/>
            <person name="Flavell R.B."/>
            <person name="Feldmann K.A."/>
        </authorList>
    </citation>
    <scope>NUCLEOTIDE SEQUENCE [LARGE SCALE MRNA]</scope>
</reference>
<reference key="5">
    <citation type="journal article" date="2007" name="Plant Mol. Biol.">
        <title>Arabidopsis thaliana AtGppl and AtGpp2: two novel low molecular weight phosphatases involved in plant glycerol metabolism.</title>
        <authorList>
            <person name="Caparros-Martin J.A."/>
            <person name="Reiland S."/>
            <person name="Koechert K."/>
            <person name="Cutanda M.C."/>
            <person name="Culianez-Macia F.A."/>
        </authorList>
    </citation>
    <scope>BIOPHYSICOCHEMICAL PROPERTIES</scope>
    <scope>TISSUE SPECIFICITY</scope>
    <scope>SUBCELLULAR LOCATION</scope>
    <scope>FUNCTION</scope>
</reference>
<sequence length="240" mass="26780">MSNPAAVTAGRGSITHVIFDMDGLLLDTEKFYTEVQEIILARFNKKFDWSLKAKMMGRKAIEAARIFVEESGISDSLSAEDFLVERESMLQDLFPTSELMPGASRLIKHLHVKNIPICIATGTHTRHYDLKTQRHRELFSLMHHVVRGDDPEVKQGKPAPDGFLAAARRFKDGPVDSQKVLVFEDAPSGVLAAKNAGMNVVMVPDPRLDISHQDVADQIITSLVDFKPEEWGLPPFEDSN</sequence>
<feature type="chain" id="PRO_0000424318" description="(DL)-glycerol-3-phosphatase 2">
    <location>
        <begin position="1"/>
        <end position="240"/>
    </location>
</feature>
<feature type="active site" description="Nucleophile" evidence="1">
    <location>
        <position position="20"/>
    </location>
</feature>
<feature type="active site" description="Proton donor" evidence="1">
    <location>
        <position position="22"/>
    </location>
</feature>
<feature type="binding site" evidence="1">
    <location>
        <position position="20"/>
    </location>
    <ligand>
        <name>Mg(2+)</name>
        <dbReference type="ChEBI" id="CHEBI:18420"/>
    </ligand>
</feature>
<feature type="binding site" evidence="1">
    <location>
        <position position="22"/>
    </location>
    <ligand>
        <name>Mg(2+)</name>
        <dbReference type="ChEBI" id="CHEBI:18420"/>
    </ligand>
</feature>
<feature type="binding site" evidence="1">
    <location>
        <position position="185"/>
    </location>
    <ligand>
        <name>Mg(2+)</name>
        <dbReference type="ChEBI" id="CHEBI:18420"/>
    </ligand>
</feature>